<keyword id="KW-1185">Reference proteome</keyword>
<keyword id="KW-0687">Ribonucleoprotein</keyword>
<keyword id="KW-0689">Ribosomal protein</keyword>
<keyword id="KW-0694">RNA-binding</keyword>
<keyword id="KW-0699">rRNA-binding</keyword>
<organism>
    <name type="scientific">Escherichia coli (strain 55989 / EAEC)</name>
    <dbReference type="NCBI Taxonomy" id="585055"/>
    <lineage>
        <taxon>Bacteria</taxon>
        <taxon>Pseudomonadati</taxon>
        <taxon>Pseudomonadota</taxon>
        <taxon>Gammaproteobacteria</taxon>
        <taxon>Enterobacterales</taxon>
        <taxon>Enterobacteriaceae</taxon>
        <taxon>Escherichia</taxon>
    </lineage>
</organism>
<reference key="1">
    <citation type="journal article" date="2009" name="PLoS Genet.">
        <title>Organised genome dynamics in the Escherichia coli species results in highly diverse adaptive paths.</title>
        <authorList>
            <person name="Touchon M."/>
            <person name="Hoede C."/>
            <person name="Tenaillon O."/>
            <person name="Barbe V."/>
            <person name="Baeriswyl S."/>
            <person name="Bidet P."/>
            <person name="Bingen E."/>
            <person name="Bonacorsi S."/>
            <person name="Bouchier C."/>
            <person name="Bouvet O."/>
            <person name="Calteau A."/>
            <person name="Chiapello H."/>
            <person name="Clermont O."/>
            <person name="Cruveiller S."/>
            <person name="Danchin A."/>
            <person name="Diard M."/>
            <person name="Dossat C."/>
            <person name="Karoui M.E."/>
            <person name="Frapy E."/>
            <person name="Garry L."/>
            <person name="Ghigo J.M."/>
            <person name="Gilles A.M."/>
            <person name="Johnson J."/>
            <person name="Le Bouguenec C."/>
            <person name="Lescat M."/>
            <person name="Mangenot S."/>
            <person name="Martinez-Jehanne V."/>
            <person name="Matic I."/>
            <person name="Nassif X."/>
            <person name="Oztas S."/>
            <person name="Petit M.A."/>
            <person name="Pichon C."/>
            <person name="Rouy Z."/>
            <person name="Ruf C.S."/>
            <person name="Schneider D."/>
            <person name="Tourret J."/>
            <person name="Vacherie B."/>
            <person name="Vallenet D."/>
            <person name="Medigue C."/>
            <person name="Rocha E.P.C."/>
            <person name="Denamur E."/>
        </authorList>
    </citation>
    <scope>NUCLEOTIDE SEQUENCE [LARGE SCALE GENOMIC DNA]</scope>
    <source>
        <strain>55989 / EAEC</strain>
    </source>
</reference>
<protein>
    <recommendedName>
        <fullName evidence="1">Large ribosomal subunit protein uL18</fullName>
    </recommendedName>
    <alternativeName>
        <fullName evidence="2">50S ribosomal protein L18</fullName>
    </alternativeName>
</protein>
<proteinExistence type="inferred from homology"/>
<name>RL18_ECO55</name>
<feature type="chain" id="PRO_1000166230" description="Large ribosomal subunit protein uL18">
    <location>
        <begin position="1"/>
        <end position="117"/>
    </location>
</feature>
<evidence type="ECO:0000255" key="1">
    <source>
        <dbReference type="HAMAP-Rule" id="MF_01337"/>
    </source>
</evidence>
<evidence type="ECO:0000305" key="2"/>
<accession>B7LI05</accession>
<comment type="function">
    <text evidence="1">This is one of the proteins that bind and probably mediate the attachment of the 5S RNA into the large ribosomal subunit, where it forms part of the central protuberance.</text>
</comment>
<comment type="subunit">
    <text evidence="1">Part of the 50S ribosomal subunit; part of the 5S rRNA/L5/L18/L25 subcomplex. Contacts the 5S and 23S rRNAs.</text>
</comment>
<comment type="similarity">
    <text evidence="1">Belongs to the universal ribosomal protein uL18 family.</text>
</comment>
<gene>
    <name evidence="1" type="primary">rplR</name>
    <name type="ordered locus">EC55989_3720</name>
</gene>
<sequence>MDKKSARIRRATRARRKLQELGATRLVVHRTPRHIYAQVIAPNGSEVLVAASTVEKAIAEQLKYTGNKDAAAAVGKAVAERALEKGIKDVSFDRSGFQYHGRVQALADAAREAGLQF</sequence>
<dbReference type="EMBL" id="CU928145">
    <property type="protein sequence ID" value="CAV00010.1"/>
    <property type="molecule type" value="Genomic_DNA"/>
</dbReference>
<dbReference type="RefSeq" id="WP_000358960.1">
    <property type="nucleotide sequence ID" value="NZ_CP028304.1"/>
</dbReference>
<dbReference type="SMR" id="B7LI05"/>
<dbReference type="GeneID" id="98390426"/>
<dbReference type="KEGG" id="eck:EC55989_3720"/>
<dbReference type="HOGENOM" id="CLU_098841_0_1_6"/>
<dbReference type="Proteomes" id="UP000000746">
    <property type="component" value="Chromosome"/>
</dbReference>
<dbReference type="GO" id="GO:0022625">
    <property type="term" value="C:cytosolic large ribosomal subunit"/>
    <property type="evidence" value="ECO:0007669"/>
    <property type="project" value="TreeGrafter"/>
</dbReference>
<dbReference type="GO" id="GO:0008097">
    <property type="term" value="F:5S rRNA binding"/>
    <property type="evidence" value="ECO:0007669"/>
    <property type="project" value="TreeGrafter"/>
</dbReference>
<dbReference type="GO" id="GO:0003735">
    <property type="term" value="F:structural constituent of ribosome"/>
    <property type="evidence" value="ECO:0007669"/>
    <property type="project" value="InterPro"/>
</dbReference>
<dbReference type="GO" id="GO:0006412">
    <property type="term" value="P:translation"/>
    <property type="evidence" value="ECO:0007669"/>
    <property type="project" value="UniProtKB-UniRule"/>
</dbReference>
<dbReference type="CDD" id="cd00432">
    <property type="entry name" value="Ribosomal_L18_L5e"/>
    <property type="match status" value="1"/>
</dbReference>
<dbReference type="FunFam" id="3.30.420.100:FF:000001">
    <property type="entry name" value="50S ribosomal protein L18"/>
    <property type="match status" value="1"/>
</dbReference>
<dbReference type="Gene3D" id="3.30.420.100">
    <property type="match status" value="1"/>
</dbReference>
<dbReference type="HAMAP" id="MF_01337_B">
    <property type="entry name" value="Ribosomal_uL18_B"/>
    <property type="match status" value="1"/>
</dbReference>
<dbReference type="InterPro" id="IPR004389">
    <property type="entry name" value="Ribosomal_uL18_bac-type"/>
</dbReference>
<dbReference type="InterPro" id="IPR005484">
    <property type="entry name" value="Ribosomal_uL18_bac/euk"/>
</dbReference>
<dbReference type="NCBIfam" id="TIGR00060">
    <property type="entry name" value="L18_bact"/>
    <property type="match status" value="1"/>
</dbReference>
<dbReference type="PANTHER" id="PTHR12899">
    <property type="entry name" value="39S RIBOSOMAL PROTEIN L18, MITOCHONDRIAL"/>
    <property type="match status" value="1"/>
</dbReference>
<dbReference type="PANTHER" id="PTHR12899:SF3">
    <property type="entry name" value="LARGE RIBOSOMAL SUBUNIT PROTEIN UL18M"/>
    <property type="match status" value="1"/>
</dbReference>
<dbReference type="Pfam" id="PF00861">
    <property type="entry name" value="Ribosomal_L18p"/>
    <property type="match status" value="1"/>
</dbReference>
<dbReference type="SUPFAM" id="SSF53137">
    <property type="entry name" value="Translational machinery components"/>
    <property type="match status" value="1"/>
</dbReference>